<organism>
    <name type="scientific">Citrobacter koseri (strain ATCC BAA-895 / CDC 4225-83 / SGSC4696)</name>
    <dbReference type="NCBI Taxonomy" id="290338"/>
    <lineage>
        <taxon>Bacteria</taxon>
        <taxon>Pseudomonadati</taxon>
        <taxon>Pseudomonadota</taxon>
        <taxon>Gammaproteobacteria</taxon>
        <taxon>Enterobacterales</taxon>
        <taxon>Enterobacteriaceae</taxon>
        <taxon>Citrobacter</taxon>
    </lineage>
</organism>
<keyword id="KW-0028">Amino-acid biosynthesis</keyword>
<keyword id="KW-0055">Arginine biosynthesis</keyword>
<keyword id="KW-0067">ATP-binding</keyword>
<keyword id="KW-0963">Cytoplasm</keyword>
<keyword id="KW-0418">Kinase</keyword>
<keyword id="KW-0547">Nucleotide-binding</keyword>
<keyword id="KW-1185">Reference proteome</keyword>
<keyword id="KW-0808">Transferase</keyword>
<protein>
    <recommendedName>
        <fullName evidence="1">Acetylglutamate kinase</fullName>
        <ecNumber evidence="1">2.7.2.8</ecNumber>
    </recommendedName>
    <alternativeName>
        <fullName evidence="1">N-acetyl-L-glutamate 5-phosphotransferase</fullName>
    </alternativeName>
    <alternativeName>
        <fullName evidence="1">NAG kinase</fullName>
        <shortName evidence="1">NAGK</shortName>
    </alternativeName>
</protein>
<sequence length="258" mass="27193">MMNPLIIKLGGVLLDSEEALERLFTALVNYRESHQRPLIIVHGGGCVVDELMKQLNLPVKKKNGLRVTPADQIDIITGALAGTANKTLLAWAKKHHIASVGLYLGDGDSVKVTQLDEELGHVGLAQPGSPKLINTLLEGGFLPVVSSIGVTEEGQLMNVNADQAATALAATLGADLILLSDVSGILDGKGQRIAEMTAAKAEQLIDQGIITDGMIVKVNAALDAARTLGRPVDIASWRHAEQLPALFNGTPIGTRILA</sequence>
<reference key="1">
    <citation type="submission" date="2007-08" db="EMBL/GenBank/DDBJ databases">
        <authorList>
            <consortium name="The Citrobacter koseri Genome Sequencing Project"/>
            <person name="McClelland M."/>
            <person name="Sanderson E.K."/>
            <person name="Porwollik S."/>
            <person name="Spieth J."/>
            <person name="Clifton W.S."/>
            <person name="Latreille P."/>
            <person name="Courtney L."/>
            <person name="Wang C."/>
            <person name="Pepin K."/>
            <person name="Bhonagiri V."/>
            <person name="Nash W."/>
            <person name="Johnson M."/>
            <person name="Thiruvilangam P."/>
            <person name="Wilson R."/>
        </authorList>
    </citation>
    <scope>NUCLEOTIDE SEQUENCE [LARGE SCALE GENOMIC DNA]</scope>
    <source>
        <strain>ATCC BAA-895 / CDC 4225-83 / SGSC4696</strain>
    </source>
</reference>
<evidence type="ECO:0000255" key="1">
    <source>
        <dbReference type="HAMAP-Rule" id="MF_00082"/>
    </source>
</evidence>
<feature type="chain" id="PRO_1000010497" description="Acetylglutamate kinase">
    <location>
        <begin position="1"/>
        <end position="258"/>
    </location>
</feature>
<feature type="binding site" evidence="1">
    <location>
        <begin position="44"/>
        <end position="45"/>
    </location>
    <ligand>
        <name>substrate</name>
    </ligand>
</feature>
<feature type="binding site" evidence="1">
    <location>
        <position position="66"/>
    </location>
    <ligand>
        <name>substrate</name>
    </ligand>
</feature>
<feature type="binding site" evidence="1">
    <location>
        <position position="158"/>
    </location>
    <ligand>
        <name>substrate</name>
    </ligand>
</feature>
<feature type="binding site" evidence="1">
    <location>
        <begin position="181"/>
        <end position="186"/>
    </location>
    <ligand>
        <name>ATP</name>
        <dbReference type="ChEBI" id="CHEBI:30616"/>
    </ligand>
</feature>
<feature type="binding site" evidence="1">
    <location>
        <begin position="209"/>
        <end position="211"/>
    </location>
    <ligand>
        <name>ATP</name>
        <dbReference type="ChEBI" id="CHEBI:30616"/>
    </ligand>
</feature>
<feature type="site" description="Transition state stabilizer" evidence="1">
    <location>
        <position position="8"/>
    </location>
</feature>
<feature type="site" description="Transition state stabilizer" evidence="1">
    <location>
        <position position="217"/>
    </location>
</feature>
<accession>A8AKW3</accession>
<name>ARGB_CITK8</name>
<dbReference type="EC" id="2.7.2.8" evidence="1"/>
<dbReference type="EMBL" id="CP000822">
    <property type="protein sequence ID" value="ABV14126.1"/>
    <property type="molecule type" value="Genomic_DNA"/>
</dbReference>
<dbReference type="SMR" id="A8AKW3"/>
<dbReference type="STRING" id="290338.CKO_03035"/>
<dbReference type="KEGG" id="cko:CKO_03035"/>
<dbReference type="HOGENOM" id="CLU_053680_1_1_6"/>
<dbReference type="OrthoDB" id="5915023at2"/>
<dbReference type="UniPathway" id="UPA00068">
    <property type="reaction ID" value="UER00107"/>
</dbReference>
<dbReference type="Proteomes" id="UP000008148">
    <property type="component" value="Chromosome"/>
</dbReference>
<dbReference type="GO" id="GO:0005737">
    <property type="term" value="C:cytoplasm"/>
    <property type="evidence" value="ECO:0007669"/>
    <property type="project" value="UniProtKB-SubCell"/>
</dbReference>
<dbReference type="GO" id="GO:0003991">
    <property type="term" value="F:acetylglutamate kinase activity"/>
    <property type="evidence" value="ECO:0007669"/>
    <property type="project" value="UniProtKB-UniRule"/>
</dbReference>
<dbReference type="GO" id="GO:0005524">
    <property type="term" value="F:ATP binding"/>
    <property type="evidence" value="ECO:0007669"/>
    <property type="project" value="UniProtKB-UniRule"/>
</dbReference>
<dbReference type="GO" id="GO:0042450">
    <property type="term" value="P:arginine biosynthetic process via ornithine"/>
    <property type="evidence" value="ECO:0007669"/>
    <property type="project" value="UniProtKB-UniRule"/>
</dbReference>
<dbReference type="GO" id="GO:0006526">
    <property type="term" value="P:L-arginine biosynthetic process"/>
    <property type="evidence" value="ECO:0007669"/>
    <property type="project" value="UniProtKB-UniPathway"/>
</dbReference>
<dbReference type="CDD" id="cd04249">
    <property type="entry name" value="AAK_NAGK-NC"/>
    <property type="match status" value="1"/>
</dbReference>
<dbReference type="FunFam" id="3.40.1160.10:FF:000008">
    <property type="entry name" value="Acetylglutamate kinase"/>
    <property type="match status" value="1"/>
</dbReference>
<dbReference type="Gene3D" id="3.40.1160.10">
    <property type="entry name" value="Acetylglutamate kinase-like"/>
    <property type="match status" value="1"/>
</dbReference>
<dbReference type="HAMAP" id="MF_00082">
    <property type="entry name" value="ArgB"/>
    <property type="match status" value="1"/>
</dbReference>
<dbReference type="InterPro" id="IPR036393">
    <property type="entry name" value="AceGlu_kinase-like_sf"/>
</dbReference>
<dbReference type="InterPro" id="IPR004662">
    <property type="entry name" value="AcgluKinase_fam"/>
</dbReference>
<dbReference type="InterPro" id="IPR037528">
    <property type="entry name" value="ArgB"/>
</dbReference>
<dbReference type="InterPro" id="IPR001048">
    <property type="entry name" value="Asp/Glu/Uridylate_kinase"/>
</dbReference>
<dbReference type="InterPro" id="IPR041731">
    <property type="entry name" value="NAGK-NC"/>
</dbReference>
<dbReference type="NCBIfam" id="TIGR00761">
    <property type="entry name" value="argB"/>
    <property type="match status" value="1"/>
</dbReference>
<dbReference type="PANTHER" id="PTHR23342">
    <property type="entry name" value="N-ACETYLGLUTAMATE SYNTHASE"/>
    <property type="match status" value="1"/>
</dbReference>
<dbReference type="PANTHER" id="PTHR23342:SF0">
    <property type="entry name" value="N-ACETYLGLUTAMATE SYNTHASE, MITOCHONDRIAL"/>
    <property type="match status" value="1"/>
</dbReference>
<dbReference type="Pfam" id="PF00696">
    <property type="entry name" value="AA_kinase"/>
    <property type="match status" value="1"/>
</dbReference>
<dbReference type="PIRSF" id="PIRSF000728">
    <property type="entry name" value="NAGK"/>
    <property type="match status" value="1"/>
</dbReference>
<dbReference type="SUPFAM" id="SSF53633">
    <property type="entry name" value="Carbamate kinase-like"/>
    <property type="match status" value="1"/>
</dbReference>
<gene>
    <name evidence="1" type="primary">argB</name>
    <name type="ordered locus">CKO_03035</name>
</gene>
<proteinExistence type="inferred from homology"/>
<comment type="function">
    <text evidence="1">Catalyzes the ATP-dependent phosphorylation of N-acetyl-L-glutamate.</text>
</comment>
<comment type="catalytic activity">
    <reaction evidence="1">
        <text>N-acetyl-L-glutamate + ATP = N-acetyl-L-glutamyl 5-phosphate + ADP</text>
        <dbReference type="Rhea" id="RHEA:14629"/>
        <dbReference type="ChEBI" id="CHEBI:30616"/>
        <dbReference type="ChEBI" id="CHEBI:44337"/>
        <dbReference type="ChEBI" id="CHEBI:57936"/>
        <dbReference type="ChEBI" id="CHEBI:456216"/>
        <dbReference type="EC" id="2.7.2.8"/>
    </reaction>
</comment>
<comment type="pathway">
    <text evidence="1">Amino-acid biosynthesis; L-arginine biosynthesis; N(2)-acetyl-L-ornithine from L-glutamate: step 2/4.</text>
</comment>
<comment type="subunit">
    <text evidence="1">Homodimer.</text>
</comment>
<comment type="subcellular location">
    <subcellularLocation>
        <location evidence="1">Cytoplasm</location>
    </subcellularLocation>
</comment>
<comment type="similarity">
    <text evidence="1">Belongs to the acetylglutamate kinase family. ArgB subfamily.</text>
</comment>